<comment type="catalytic activity">
    <reaction evidence="1">
        <text>tRNA(His) + L-histidine + ATP = L-histidyl-tRNA(His) + AMP + diphosphate + H(+)</text>
        <dbReference type="Rhea" id="RHEA:17313"/>
        <dbReference type="Rhea" id="RHEA-COMP:9665"/>
        <dbReference type="Rhea" id="RHEA-COMP:9689"/>
        <dbReference type="ChEBI" id="CHEBI:15378"/>
        <dbReference type="ChEBI" id="CHEBI:30616"/>
        <dbReference type="ChEBI" id="CHEBI:33019"/>
        <dbReference type="ChEBI" id="CHEBI:57595"/>
        <dbReference type="ChEBI" id="CHEBI:78442"/>
        <dbReference type="ChEBI" id="CHEBI:78527"/>
        <dbReference type="ChEBI" id="CHEBI:456215"/>
        <dbReference type="EC" id="6.1.1.21"/>
    </reaction>
</comment>
<comment type="subunit">
    <text evidence="1">Homodimer.</text>
</comment>
<comment type="subcellular location">
    <subcellularLocation>
        <location evidence="1">Cytoplasm</location>
    </subcellularLocation>
</comment>
<comment type="similarity">
    <text evidence="1">Belongs to the class-II aminoacyl-tRNA synthetase family.</text>
</comment>
<gene>
    <name evidence="1" type="primary">hisS</name>
    <name type="ordered locus">PMI1844</name>
</gene>
<organism>
    <name type="scientific">Proteus mirabilis (strain HI4320)</name>
    <dbReference type="NCBI Taxonomy" id="529507"/>
    <lineage>
        <taxon>Bacteria</taxon>
        <taxon>Pseudomonadati</taxon>
        <taxon>Pseudomonadota</taxon>
        <taxon>Gammaproteobacteria</taxon>
        <taxon>Enterobacterales</taxon>
        <taxon>Morganellaceae</taxon>
        <taxon>Proteus</taxon>
    </lineage>
</organism>
<protein>
    <recommendedName>
        <fullName evidence="1">Histidine--tRNA ligase</fullName>
        <ecNumber evidence="1">6.1.1.21</ecNumber>
    </recommendedName>
    <alternativeName>
        <fullName evidence="1">Histidyl-tRNA synthetase</fullName>
        <shortName evidence="1">HisRS</shortName>
    </alternativeName>
</protein>
<evidence type="ECO:0000255" key="1">
    <source>
        <dbReference type="HAMAP-Rule" id="MF_00127"/>
    </source>
</evidence>
<sequence length="427" mass="47959">MAQKIQAIRGMNDYLPADTRVWQKIENTLKQILAGYGFSEIRTPIVEHTPLFQRAIGEVTDVVEKEMYTFTDRGEDAQSLTLRPENTAGCVRAGIEHGLLYNQEQRLWYLGPMFRYERPQKGRYRQFHQLGAEVFGLQGPDIDAELIMLTARWWKALGIAEHVTLELNSIGSLEARAKYREALVAFLEQHVDQLDEDCKRRMYSNPLRVLDSKNPEIQTLLNDAPELFDYLDDESREHFDGLCALLDAVGITYRVNQRLVRGLDYYNRTVFEWVTSALGSQGTVCAGGRYDGLVKQLGGHPTPAVGFAMGMERMILLVQAVNPEFVADTHVADVYLASFGDNSQSAALMLAEEIRDQLPTLRLMTNHGKGNFKKQLGRADKHGAKIALILGEDEINAGTVAVKDLRSGEQTIVSRSELAQQLTLLLG</sequence>
<name>SYH_PROMH</name>
<feature type="chain" id="PRO_1000095580" description="Histidine--tRNA ligase">
    <location>
        <begin position="1"/>
        <end position="427"/>
    </location>
</feature>
<reference key="1">
    <citation type="journal article" date="2008" name="J. Bacteriol.">
        <title>Complete genome sequence of uropathogenic Proteus mirabilis, a master of both adherence and motility.</title>
        <authorList>
            <person name="Pearson M.M."/>
            <person name="Sebaihia M."/>
            <person name="Churcher C."/>
            <person name="Quail M.A."/>
            <person name="Seshasayee A.S."/>
            <person name="Luscombe N.M."/>
            <person name="Abdellah Z."/>
            <person name="Arrosmith C."/>
            <person name="Atkin B."/>
            <person name="Chillingworth T."/>
            <person name="Hauser H."/>
            <person name="Jagels K."/>
            <person name="Moule S."/>
            <person name="Mungall K."/>
            <person name="Norbertczak H."/>
            <person name="Rabbinowitsch E."/>
            <person name="Walker D."/>
            <person name="Whithead S."/>
            <person name="Thomson N.R."/>
            <person name="Rather P.N."/>
            <person name="Parkhill J."/>
            <person name="Mobley H.L.T."/>
        </authorList>
    </citation>
    <scope>NUCLEOTIDE SEQUENCE [LARGE SCALE GENOMIC DNA]</scope>
    <source>
        <strain>HI4320</strain>
    </source>
</reference>
<keyword id="KW-0030">Aminoacyl-tRNA synthetase</keyword>
<keyword id="KW-0067">ATP-binding</keyword>
<keyword id="KW-0963">Cytoplasm</keyword>
<keyword id="KW-0436">Ligase</keyword>
<keyword id="KW-0547">Nucleotide-binding</keyword>
<keyword id="KW-0648">Protein biosynthesis</keyword>
<keyword id="KW-1185">Reference proteome</keyword>
<dbReference type="EC" id="6.1.1.21" evidence="1"/>
<dbReference type="EMBL" id="AM942759">
    <property type="protein sequence ID" value="CAR43824.1"/>
    <property type="molecule type" value="Genomic_DNA"/>
</dbReference>
<dbReference type="RefSeq" id="WP_004243819.1">
    <property type="nucleotide sequence ID" value="NC_010554.1"/>
</dbReference>
<dbReference type="SMR" id="B4EZT2"/>
<dbReference type="EnsemblBacteria" id="CAR43824">
    <property type="protein sequence ID" value="CAR43824"/>
    <property type="gene ID" value="PMI1844"/>
</dbReference>
<dbReference type="GeneID" id="6802366"/>
<dbReference type="KEGG" id="pmr:PMI1844"/>
<dbReference type="eggNOG" id="COG0124">
    <property type="taxonomic scope" value="Bacteria"/>
</dbReference>
<dbReference type="HOGENOM" id="CLU_025113_1_1_6"/>
<dbReference type="Proteomes" id="UP000008319">
    <property type="component" value="Chromosome"/>
</dbReference>
<dbReference type="GO" id="GO:0005737">
    <property type="term" value="C:cytoplasm"/>
    <property type="evidence" value="ECO:0007669"/>
    <property type="project" value="UniProtKB-SubCell"/>
</dbReference>
<dbReference type="GO" id="GO:0005524">
    <property type="term" value="F:ATP binding"/>
    <property type="evidence" value="ECO:0007669"/>
    <property type="project" value="UniProtKB-UniRule"/>
</dbReference>
<dbReference type="GO" id="GO:0004821">
    <property type="term" value="F:histidine-tRNA ligase activity"/>
    <property type="evidence" value="ECO:0007669"/>
    <property type="project" value="UniProtKB-UniRule"/>
</dbReference>
<dbReference type="GO" id="GO:0006427">
    <property type="term" value="P:histidyl-tRNA aminoacylation"/>
    <property type="evidence" value="ECO:0007669"/>
    <property type="project" value="UniProtKB-UniRule"/>
</dbReference>
<dbReference type="CDD" id="cd00773">
    <property type="entry name" value="HisRS-like_core"/>
    <property type="match status" value="1"/>
</dbReference>
<dbReference type="CDD" id="cd00859">
    <property type="entry name" value="HisRS_anticodon"/>
    <property type="match status" value="1"/>
</dbReference>
<dbReference type="FunFam" id="3.30.930.10:FF:000005">
    <property type="entry name" value="Histidine--tRNA ligase"/>
    <property type="match status" value="1"/>
</dbReference>
<dbReference type="Gene3D" id="3.40.50.800">
    <property type="entry name" value="Anticodon-binding domain"/>
    <property type="match status" value="1"/>
</dbReference>
<dbReference type="Gene3D" id="3.30.930.10">
    <property type="entry name" value="Bira Bifunctional Protein, Domain 2"/>
    <property type="match status" value="1"/>
</dbReference>
<dbReference type="HAMAP" id="MF_00127">
    <property type="entry name" value="His_tRNA_synth"/>
    <property type="match status" value="1"/>
</dbReference>
<dbReference type="InterPro" id="IPR006195">
    <property type="entry name" value="aa-tRNA-synth_II"/>
</dbReference>
<dbReference type="InterPro" id="IPR045864">
    <property type="entry name" value="aa-tRNA-synth_II/BPL/LPL"/>
</dbReference>
<dbReference type="InterPro" id="IPR004154">
    <property type="entry name" value="Anticodon-bd"/>
</dbReference>
<dbReference type="InterPro" id="IPR036621">
    <property type="entry name" value="Anticodon-bd_dom_sf"/>
</dbReference>
<dbReference type="InterPro" id="IPR015807">
    <property type="entry name" value="His-tRNA-ligase"/>
</dbReference>
<dbReference type="InterPro" id="IPR041715">
    <property type="entry name" value="HisRS-like_core"/>
</dbReference>
<dbReference type="InterPro" id="IPR004516">
    <property type="entry name" value="HisRS/HisZ"/>
</dbReference>
<dbReference type="InterPro" id="IPR033656">
    <property type="entry name" value="HisRS_anticodon"/>
</dbReference>
<dbReference type="NCBIfam" id="TIGR00442">
    <property type="entry name" value="hisS"/>
    <property type="match status" value="1"/>
</dbReference>
<dbReference type="PANTHER" id="PTHR43707:SF1">
    <property type="entry name" value="HISTIDINE--TRNA LIGASE, MITOCHONDRIAL-RELATED"/>
    <property type="match status" value="1"/>
</dbReference>
<dbReference type="PANTHER" id="PTHR43707">
    <property type="entry name" value="HISTIDYL-TRNA SYNTHETASE"/>
    <property type="match status" value="1"/>
</dbReference>
<dbReference type="Pfam" id="PF03129">
    <property type="entry name" value="HGTP_anticodon"/>
    <property type="match status" value="1"/>
</dbReference>
<dbReference type="Pfam" id="PF13393">
    <property type="entry name" value="tRNA-synt_His"/>
    <property type="match status" value="1"/>
</dbReference>
<dbReference type="PIRSF" id="PIRSF001549">
    <property type="entry name" value="His-tRNA_synth"/>
    <property type="match status" value="1"/>
</dbReference>
<dbReference type="SUPFAM" id="SSF52954">
    <property type="entry name" value="Class II aaRS ABD-related"/>
    <property type="match status" value="1"/>
</dbReference>
<dbReference type="SUPFAM" id="SSF55681">
    <property type="entry name" value="Class II aaRS and biotin synthetases"/>
    <property type="match status" value="1"/>
</dbReference>
<dbReference type="PROSITE" id="PS50862">
    <property type="entry name" value="AA_TRNA_LIGASE_II"/>
    <property type="match status" value="1"/>
</dbReference>
<proteinExistence type="inferred from homology"/>
<accession>B4EZT2</accession>